<gene>
    <name evidence="2" type="primary">DBP</name>
    <name type="ORF">BALF2</name>
</gene>
<keyword id="KW-0235">DNA replication</keyword>
<keyword id="KW-0238">DNA-binding</keyword>
<keyword id="KW-1048">Host nucleus</keyword>
<keyword id="KW-1185">Reference proteome</keyword>
<keyword id="KW-0946">Virion</keyword>
<keyword id="KW-0920">Virion tegument</keyword>
<evidence type="ECO:0000250" key="1">
    <source>
        <dbReference type="UniProtKB" id="Q8WUF5"/>
    </source>
</evidence>
<evidence type="ECO:0000255" key="2">
    <source>
        <dbReference type="HAMAP-Rule" id="MF_04007"/>
    </source>
</evidence>
<protein>
    <recommendedName>
        <fullName evidence="2">Major DNA-binding protein</fullName>
    </recommendedName>
</protein>
<accession>Q1HVB8</accession>
<comment type="function">
    <text evidence="2">Plays several crucial roles in viral infection. Participates in the opening of the viral DNA origin to initiate replication by interacting with the origin-binding protein. May disrupt loops, hairpins and other secondary structures present on ssDNA to reduce and eliminate pausing of viral DNA polymerase at specific sites during elongation. Promotes viral DNA recombination by performing strand-transfer, characterized by the ability to transfer a DNA strand from a linear duplex to a complementary single-stranded DNA circle. Can also catalyze the renaturation of complementary single strands. Additionally, reorganizes the host cell nucleus, leading to the formation of prereplicative sites and replication compartments. This process is driven by the protein which can form double-helical filaments in the absence of DNA.</text>
</comment>
<comment type="subunit">
    <text evidence="2">Homooligomers. Forms double-helical filaments necessary for the formation of replication compartments within the host nucleus. Interacts with the origin-binding protein. Interacts with the helicase primase complex; this interaction stimulates primer synthesis activity of the helicase-primase complex. Interacts with the DNA polymerase. Interacts with the alkaline exonuclease; this interaction increases its nuclease processivity.</text>
</comment>
<comment type="subcellular location">
    <subcellularLocation>
        <location evidence="1">Virion tegument</location>
    </subcellularLocation>
    <subcellularLocation>
        <location evidence="2">Host nucleus</location>
    </subcellularLocation>
    <text evidence="2">In the absence of DNA replication, found in the nuclear framework-associated structures (prereplicative sites). As viral DNA replication proceeds, it migrates to globular intranuclear structures (replication compartments).</text>
</comment>
<comment type="similarity">
    <text evidence="2">Belongs to the herpesviridae major DNA-binding protein family.</text>
</comment>
<dbReference type="EMBL" id="DQ279927">
    <property type="protein sequence ID" value="ABB89289.1"/>
    <property type="molecule type" value="Genomic_DNA"/>
</dbReference>
<dbReference type="RefSeq" id="YP_001129510.1">
    <property type="nucleotide sequence ID" value="NC_009334.1"/>
</dbReference>
<dbReference type="SMR" id="Q1HVB8"/>
<dbReference type="KEGG" id="vg:5176206"/>
<dbReference type="Proteomes" id="UP000007639">
    <property type="component" value="Genome"/>
</dbReference>
<dbReference type="GO" id="GO:0042025">
    <property type="term" value="C:host cell nucleus"/>
    <property type="evidence" value="ECO:0007669"/>
    <property type="project" value="UniProtKB-SubCell"/>
</dbReference>
<dbReference type="GO" id="GO:0019033">
    <property type="term" value="C:viral tegument"/>
    <property type="evidence" value="ECO:0007669"/>
    <property type="project" value="UniProtKB-SubCell"/>
</dbReference>
<dbReference type="GO" id="GO:0003697">
    <property type="term" value="F:single-stranded DNA binding"/>
    <property type="evidence" value="ECO:0007669"/>
    <property type="project" value="InterPro"/>
</dbReference>
<dbReference type="GO" id="GO:0006260">
    <property type="term" value="P:DNA replication"/>
    <property type="evidence" value="ECO:0007669"/>
    <property type="project" value="UniProtKB-KW"/>
</dbReference>
<dbReference type="FunFam" id="1.20.190.40:FF:000003">
    <property type="entry name" value="Major DNA-binding protein"/>
    <property type="match status" value="1"/>
</dbReference>
<dbReference type="FunFam" id="1.20.190.40:FF:000004">
    <property type="entry name" value="Major DNA-binding protein"/>
    <property type="match status" value="1"/>
</dbReference>
<dbReference type="Gene3D" id="1.20.190.40">
    <property type="entry name" value="Viral ssDNA binding protein, head domain"/>
    <property type="match status" value="2"/>
</dbReference>
<dbReference type="HAMAP" id="MF_04007">
    <property type="entry name" value="HSV_DNBI"/>
    <property type="match status" value="1"/>
</dbReference>
<dbReference type="InterPro" id="IPR035989">
    <property type="entry name" value="DBP_sf"/>
</dbReference>
<dbReference type="InterPro" id="IPR043031">
    <property type="entry name" value="Viral_ssDBP_head"/>
</dbReference>
<dbReference type="InterPro" id="IPR000635">
    <property type="entry name" value="Viral_ssDNA-bd"/>
</dbReference>
<dbReference type="Pfam" id="PF00747">
    <property type="entry name" value="Viral_DNA_bp"/>
    <property type="match status" value="1"/>
</dbReference>
<dbReference type="SUPFAM" id="SSF118208">
    <property type="entry name" value="Viral ssDNA binding protein"/>
    <property type="match status" value="1"/>
</dbReference>
<proteinExistence type="inferred from homology"/>
<feature type="chain" id="PRO_0000375923" description="Major DNA-binding protein">
    <location>
        <begin position="1"/>
        <end position="1128"/>
    </location>
</feature>
<feature type="region of interest" description="Required for nuclear localization" evidence="2">
    <location>
        <begin position="1104"/>
        <end position="1128"/>
    </location>
</feature>
<sequence>MQGAQTSEDNLGSQSQPGPCGYIYFYPLATYPLREVATLGTGYAGHRCLTVPLLCGITVEPGFSINVKALHRRPDPNCGLLRATSYHRDIYVFHNAHMVPPIFEGPGLEALCGETREVFGYDAYSALPRESSEPGDFFPEGLDPSAYLGAVAITEAFKERLYSGNLVAIPSLKQEVAVGQSASVRVPLYDKEVFPEGVPQLRQFYNSDLSRCMHEALYTGLAQALRVRRVGKLVELLEKQSLQDQAKVAKVAPLKEFPASTISHPDSGALMIVDSAACELAVSYAPAMLEASHETPASLNYDSWPLFADCEGPEARVAALHRYNASLAPHVSTQIFATNSVLYVSGVSKSTGQGKESLFNSFYMTHGLGTLQEGTWDPCRRPCFSGWGGPDVTGTNGPGNYAVEHLVYAASFSPNLLARYAYYLQFCQGQKSSLTPVPETGSYVAGAAASPMCSLCEGRAPAVCLNTLFFRLRDRFPPVMSTQRRDPYVISGASGSYNETDFLGNFLNFIDKEDDGQRPDDEPRYTYWQLNQNLLERLSRLGIDAEGKLEKEPHGPRDFVKMFKDVDAAVDAEVVQFMNSMAKNNITYKDLVKSCYHVMQYSCNPFAQPACPIFTQLFYRSLLTILQDISLPICMCYENDNPGLGQSPPEWLKGHYQTLCTNFRSLAIDKGVLTAKEAKVVHGEPTCDLPDLDAALQGRVYGRRLPVRMSKVLMLCPRNIKIKNRVVFTGENAALQNSFIKSTTRRENYIINGPYMKFLNTYHKTLFPDTKLSSLYLWHNFSRRRSVPVPSGASAEEYSDLALFVDGGSRAHEESNVIDVVPGNLVTYAKQRLNNAILKACGQTQFYISLIQGLVPRTQSVPARDYPHVLGTRAVESAAAYAEATSSLTATTVVCAATDCLSQVCKARPVVTLPVTINKYTGVNGNNQIFQAGNLGYFMGRGVDRNLLQAPGAGLRKQAGGSSMRKKFVFATPTLGLTVKRRTQAATTYEIENIRAGLEAIISQKQEEDCVFDVVCNLVDAMGEACASLTRDDAEYLLGRFSVLADSVLETLATIASSGIEWTAGAARDFLEGVWGGPGAAQDNFISVAEPVSTASQASAGLLLGGGGQGSGGRRKRRLATVLPGLEV</sequence>
<reference key="1">
    <citation type="journal article" date="2006" name="Virology">
        <title>The genome of Epstein-Barr virus type 2 strain AG876.</title>
        <authorList>
            <person name="Dolan A."/>
            <person name="Addison C."/>
            <person name="Gatherer D."/>
            <person name="Davison A.J."/>
            <person name="McGeoch D.J."/>
        </authorList>
    </citation>
    <scope>NUCLEOTIDE SEQUENCE [LARGE SCALE GENOMIC DNA]</scope>
</reference>
<name>DNBI_EBVA8</name>
<organismHost>
    <name type="scientific">Homo sapiens</name>
    <name type="common">Human</name>
    <dbReference type="NCBI Taxonomy" id="9606"/>
</organismHost>
<organism>
    <name type="scientific">Epstein-Barr virus (strain AG876)</name>
    <name type="common">HHV-4</name>
    <name type="synonym">Human herpesvirus 4</name>
    <dbReference type="NCBI Taxonomy" id="82830"/>
    <lineage>
        <taxon>Viruses</taxon>
        <taxon>Duplodnaviria</taxon>
        <taxon>Heunggongvirae</taxon>
        <taxon>Peploviricota</taxon>
        <taxon>Herviviricetes</taxon>
        <taxon>Herpesvirales</taxon>
        <taxon>Orthoherpesviridae</taxon>
        <taxon>Gammaherpesvirinae</taxon>
        <taxon>Lymphocryptovirus</taxon>
        <taxon>Lymphocryptovirus humangamma4</taxon>
        <taxon>Epstein-Barr virus (strain GD1)</taxon>
    </lineage>
</organism>